<comment type="function">
    <text evidence="2 6">Catalyzes the deamination of three SAM-derived enzymatic products, namely 5'-deoxyadenosine, S-adenosyl-L-homocysteine, and 5'-methylthioadenosine, to produce the inosine analogs. Can also deaminate adenosine. The preferred substrate for this enzyme is 5'-deoxyadenosine, but all these substrates are efficiently deaminated (PubMed:24375099). Likely functions in a S-adenosyl-L-methionine (SAM) recycling pathway from S-adenosyl-L-homocysteine (SAH) produced from SAM-dependent methylation reactions (PubMed:25917907). May also be involved in the recycling of 5'-deoxyadenosine, whereupon the 5'-deoxyribose moiety of 5'-deoxyinosine is further metabolized to deoxyhexoses used for the biosynthesis of aromatic amino acids in methanogens (PubMed:24375099).</text>
</comment>
<comment type="catalytic activity">
    <reaction evidence="1 2">
        <text>5'-deoxyadenosine + H2O + H(+) = 5'-deoxyinosine + NH4(+)</text>
        <dbReference type="Rhea" id="RHEA:42892"/>
        <dbReference type="ChEBI" id="CHEBI:15377"/>
        <dbReference type="ChEBI" id="CHEBI:15378"/>
        <dbReference type="ChEBI" id="CHEBI:17319"/>
        <dbReference type="ChEBI" id="CHEBI:28938"/>
        <dbReference type="ChEBI" id="CHEBI:82775"/>
        <dbReference type="EC" id="3.5.4.41"/>
    </reaction>
    <physiologicalReaction direction="left-to-right" evidence="5">
        <dbReference type="Rhea" id="RHEA:42893"/>
    </physiologicalReaction>
</comment>
<comment type="catalytic activity">
    <reaction evidence="2 3">
        <text>S-adenosyl-L-homocysteine + H2O + H(+) = S-inosyl-L-homocysteine + NH4(+)</text>
        <dbReference type="Rhea" id="RHEA:20716"/>
        <dbReference type="ChEBI" id="CHEBI:15377"/>
        <dbReference type="ChEBI" id="CHEBI:15378"/>
        <dbReference type="ChEBI" id="CHEBI:28938"/>
        <dbReference type="ChEBI" id="CHEBI:57856"/>
        <dbReference type="ChEBI" id="CHEBI:57985"/>
        <dbReference type="EC" id="3.5.4.28"/>
    </reaction>
    <physiologicalReaction direction="left-to-right" evidence="5 6">
        <dbReference type="Rhea" id="RHEA:20717"/>
    </physiologicalReaction>
</comment>
<comment type="catalytic activity">
    <reaction evidence="2">
        <text>S-methyl-5'-thioadenosine + H2O + H(+) = S-methyl-5'-thioinosine + NH4(+)</text>
        <dbReference type="Rhea" id="RHEA:25025"/>
        <dbReference type="ChEBI" id="CHEBI:15377"/>
        <dbReference type="ChEBI" id="CHEBI:15378"/>
        <dbReference type="ChEBI" id="CHEBI:17509"/>
        <dbReference type="ChEBI" id="CHEBI:28938"/>
        <dbReference type="ChEBI" id="CHEBI:48595"/>
        <dbReference type="EC" id="3.5.4.31"/>
    </reaction>
    <physiologicalReaction direction="left-to-right" evidence="5">
        <dbReference type="Rhea" id="RHEA:25026"/>
    </physiologicalReaction>
</comment>
<comment type="catalytic activity">
    <reaction evidence="2">
        <text>adenosine + H2O + H(+) = inosine + NH4(+)</text>
        <dbReference type="Rhea" id="RHEA:24408"/>
        <dbReference type="ChEBI" id="CHEBI:15377"/>
        <dbReference type="ChEBI" id="CHEBI:15378"/>
        <dbReference type="ChEBI" id="CHEBI:16335"/>
        <dbReference type="ChEBI" id="CHEBI:17596"/>
        <dbReference type="ChEBI" id="CHEBI:28938"/>
        <dbReference type="EC" id="3.5.4.4"/>
    </reaction>
    <physiologicalReaction direction="left-to-right" evidence="5">
        <dbReference type="Rhea" id="RHEA:24409"/>
    </physiologicalReaction>
</comment>
<comment type="cofactor">
    <cofactor evidence="1">
        <name>Zn(2+)</name>
        <dbReference type="ChEBI" id="CHEBI:29105"/>
    </cofactor>
    <text evidence="1">Binds 1 zinc ion per subunit.</text>
</comment>
<comment type="biophysicochemical properties">
    <kinetics>
        <KM evidence="2">0.014 mM for 5'-deoxyadenosine (at pH 9 and 60 degrees Celsius)</KM>
        <KM evidence="2">0.11 mM for S-methyl-5'-thioadenosine (at pH 9 and 60 degrees Celsius)</KM>
        <KM evidence="2">1.1 mM for S-adenosyl-L-homocysteine (at pH 9 and 60 degrees Celsius)</KM>
        <KM evidence="2">0.15 mM for adenosine (at pH 9 and 60 degrees Celsius)</KM>
        <text evidence="2">kcat is 120000 sec(-1) for 5'-deoxyadenosine deamination. kcat is 160 sec(-1) for S-methyl-5'-thioadenosine deamination. kcat is 1300 sec(-1) for S-adenosyl-L-homocysteine deamination. kcat is 110 sec(-1) for adenosine deamination (at pH 9 and 60 degrees Celsius).</text>
    </kinetics>
    <phDependence>
        <text evidence="2">Optimum pH is 9.0.</text>
    </phDependence>
</comment>
<comment type="pathway">
    <text evidence="6">Amino-acid biosynthesis; S-adenosyl-L-methionine biosynthesis.</text>
</comment>
<comment type="subunit">
    <text evidence="2">Homotetramer.</text>
</comment>
<comment type="miscellaneous">
    <text evidence="5 6">SAH is a product of SAM methyltransferases and is known to be a feedback inhibitor of these enzymes. As a result of this inhibition, organisms have evolved efficient enzymes to metabolize SAH via different pathways. The pathway found in methanogens differs from the canonical pathway, it uses the deamination of S-adenosyl-L-homocysteine to form S-inosyl-L-homocysteine for the regeneration of SAM from S-adenosyl-L-homocysteine (PubMed:25917907). 5'-deoxyadenosine is a radical SAM enzyme reaction product which strongly inhibits radical SAM enzymes. A pathway for removing this product must be present in methanogens where the MTA/SAH nucleosidase which normally metabolizes this compound is absent (PubMed:24375099).</text>
</comment>
<comment type="similarity">
    <text evidence="1">Belongs to the metallo-dependent hydrolases superfamily. MTA/SAH deaminase family.</text>
</comment>
<protein>
    <recommendedName>
        <fullName evidence="1 4">5'-deoxyadenosine deaminase</fullName>
        <shortName evidence="1 4">5'-dA deaminase</shortName>
        <ecNumber evidence="1 2">3.5.4.41</ecNumber>
    </recommendedName>
    <alternativeName>
        <fullName evidence="5">5'-methylthioadenosine deaminase</fullName>
        <shortName evidence="5">MTA deaminase</shortName>
        <ecNumber evidence="2">3.5.4.31</ecNumber>
    </alternativeName>
    <alternativeName>
        <fullName evidence="5">Adenosine deaminase</fullName>
        <ecNumber evidence="2">3.5.4.4</ecNumber>
    </alternativeName>
    <alternativeName>
        <fullName evidence="5 6">S-adenosylhomocysteine deaminase</fullName>
        <shortName evidence="5 6">SAH deaminase</shortName>
        <ecNumber evidence="2 3">3.5.4.28</ecNumber>
    </alternativeName>
</protein>
<gene>
    <name evidence="1 4" type="primary">dadD</name>
    <name type="ordered locus">MJ1541</name>
</gene>
<sequence length="420" mass="47468">MILIKNVFVNGKRQDILIEGNKIKKIGEVKKEEIENAEIIDGKNKIAIPGLINTHTHIPMTLFRGVADDLPLMEWLNNYIWPMEAKLNEEIVYWGTLLGCIEMIRSGTTTFNDMYFFLEGIAKAVDESGMRAVLAYGMIDLFDEERRERELKNAEKYINYINSLNNSRIMPALGPHAPYTCSKELLMEVNNLAKKYNVPIHIHLNETLDEIKMVKEKTGMEPFIYLNSFGFFDDVRAIAAHCVHLTDEEIKIMKQKNINVSHNPISNLKLASGVAPIPKLLAEGINVTLGTDGCGSNNNLNLFEEIKVSAILHKGVNLNPTVVKAEEAFNFATKNGAKALNIKAGEIREGYLADIVLINLDKPYLYPKENIMSHLVYAFNGFVDDVIIDGNIVMRDGEILTVDEEKVYEKAEEMYEILRS</sequence>
<organism>
    <name type="scientific">Methanocaldococcus jannaschii (strain ATCC 43067 / DSM 2661 / JAL-1 / JCM 10045 / NBRC 100440)</name>
    <name type="common">Methanococcus jannaschii</name>
    <dbReference type="NCBI Taxonomy" id="243232"/>
    <lineage>
        <taxon>Archaea</taxon>
        <taxon>Methanobacteriati</taxon>
        <taxon>Methanobacteriota</taxon>
        <taxon>Methanomada group</taxon>
        <taxon>Methanococci</taxon>
        <taxon>Methanococcales</taxon>
        <taxon>Methanocaldococcaceae</taxon>
        <taxon>Methanocaldococcus</taxon>
    </lineage>
</organism>
<reference key="1">
    <citation type="journal article" date="1996" name="Science">
        <title>Complete genome sequence of the methanogenic archaeon, Methanococcus jannaschii.</title>
        <authorList>
            <person name="Bult C.J."/>
            <person name="White O."/>
            <person name="Olsen G.J."/>
            <person name="Zhou L."/>
            <person name="Fleischmann R.D."/>
            <person name="Sutton G.G."/>
            <person name="Blake J.A."/>
            <person name="FitzGerald L.M."/>
            <person name="Clayton R.A."/>
            <person name="Gocayne J.D."/>
            <person name="Kerlavage A.R."/>
            <person name="Dougherty B.A."/>
            <person name="Tomb J.-F."/>
            <person name="Adams M.D."/>
            <person name="Reich C.I."/>
            <person name="Overbeek R."/>
            <person name="Kirkness E.F."/>
            <person name="Weinstock K.G."/>
            <person name="Merrick J.M."/>
            <person name="Glodek A."/>
            <person name="Scott J.L."/>
            <person name="Geoghagen N.S.M."/>
            <person name="Weidman J.F."/>
            <person name="Fuhrmann J.L."/>
            <person name="Nguyen D."/>
            <person name="Utterback T.R."/>
            <person name="Kelley J.M."/>
            <person name="Peterson J.D."/>
            <person name="Sadow P.W."/>
            <person name="Hanna M.C."/>
            <person name="Cotton M.D."/>
            <person name="Roberts K.M."/>
            <person name="Hurst M.A."/>
            <person name="Kaine B.P."/>
            <person name="Borodovsky M."/>
            <person name="Klenk H.-P."/>
            <person name="Fraser C.M."/>
            <person name="Smith H.O."/>
            <person name="Woese C.R."/>
            <person name="Venter J.C."/>
        </authorList>
    </citation>
    <scope>NUCLEOTIDE SEQUENCE [LARGE SCALE GENOMIC DNA]</scope>
    <source>
        <strain>ATCC 43067 / DSM 2661 / JAL-1 / JCM 10045 / NBRC 100440</strain>
    </source>
</reference>
<reference key="2">
    <citation type="journal article" date="2014" name="J. Bacteriol.">
        <title>Identification of a 5'-deoxyadenosine deaminase in Methanocaldococcus jannaschii and its possible role in recycling the radical S-adenosylmethionine enzyme reaction product 5'-deoxyadenosine.</title>
        <authorList>
            <person name="Miller D."/>
            <person name="O'Brien K."/>
            <person name="Xu H."/>
            <person name="White R.H."/>
        </authorList>
    </citation>
    <scope>FUNCTION</scope>
    <scope>CATALYTIC ACTIVITY</scope>
    <scope>SUBSTRATE SPECIFICITY</scope>
    <scope>BIOPHYSICOCHEMICAL PROPERTIES</scope>
    <scope>SUBUNIT</scope>
    <scope>MUTAGENESIS OF TYR-136; GLU-150 AND CYS-294</scope>
</reference>
<reference key="3">
    <citation type="journal article" date="2015" name="J. Bacteriol.">
        <title>S-Inosyl-L-Homocysteine Hydrolase, a Novel Enzyme Involved in S-Adenosyl-L-Methionine Recycling.</title>
        <authorList>
            <person name="Miller D."/>
            <person name="Xu H."/>
            <person name="White R.H."/>
        </authorList>
    </citation>
    <scope>FUNCTION</scope>
    <scope>CATALYTIC ACTIVITY</scope>
    <scope>PATHWAY</scope>
</reference>
<proteinExistence type="evidence at protein level"/>
<name>DADD_METJA</name>
<accession>Q58936</accession>
<keyword id="KW-0378">Hydrolase</keyword>
<keyword id="KW-0479">Metal-binding</keyword>
<keyword id="KW-1185">Reference proteome</keyword>
<keyword id="KW-0862">Zinc</keyword>
<feature type="chain" id="PRO_0000122311" description="5'-deoxyadenosine deaminase">
    <location>
        <begin position="1"/>
        <end position="420"/>
    </location>
</feature>
<feature type="binding site" evidence="1">
    <location>
        <position position="55"/>
    </location>
    <ligand>
        <name>Zn(2+)</name>
        <dbReference type="ChEBI" id="CHEBI:29105"/>
    </ligand>
</feature>
<feature type="binding site" evidence="1">
    <location>
        <position position="57"/>
    </location>
    <ligand>
        <name>Zn(2+)</name>
        <dbReference type="ChEBI" id="CHEBI:29105"/>
    </ligand>
</feature>
<feature type="binding site" evidence="1">
    <location>
        <position position="84"/>
    </location>
    <ligand>
        <name>substrate</name>
    </ligand>
</feature>
<feature type="binding site" evidence="1">
    <location>
        <position position="176"/>
    </location>
    <ligand>
        <name>substrate</name>
    </ligand>
</feature>
<feature type="binding site" evidence="1">
    <location>
        <position position="203"/>
    </location>
    <ligand>
        <name>Zn(2+)</name>
        <dbReference type="ChEBI" id="CHEBI:29105"/>
    </ligand>
</feature>
<feature type="binding site" evidence="1">
    <location>
        <position position="206"/>
    </location>
    <ligand>
        <name>substrate</name>
    </ligand>
</feature>
<feature type="binding site" evidence="1">
    <location>
        <position position="292"/>
    </location>
    <ligand>
        <name>substrate</name>
    </ligand>
</feature>
<feature type="binding site" evidence="1">
    <location>
        <position position="292"/>
    </location>
    <ligand>
        <name>Zn(2+)</name>
        <dbReference type="ChEBI" id="CHEBI:29105"/>
    </ligand>
</feature>
<feature type="mutagenesis site" description="Lowers temperature stability by 10 degrees Celsius and decreases activity by 364-fold with 5'-deoxyadenosine as substrate. Lowers temperature stability by 35 degrees Celsius and decreases activity by 100000-fold with 5'-deoxyadenosine as substrate; when associated with R-150." evidence="2">
    <original>Y</original>
    <variation>R</variation>
    <location>
        <position position="136"/>
    </location>
</feature>
<feature type="mutagenesis site" description="Lowers temperature stability by 10 degrees Celsius and decreases activity by 571-fold with 5'-deoxyadenosine as substrate. Lowers temperature stability by 35 degrees Celsius and decreases activity by 100000-fold with 5'-deoxyadenosine as substrate; when associated with R-136." evidence="2">
    <original>E</original>
    <variation>R</variation>
    <location>
        <position position="150"/>
    </location>
</feature>
<feature type="mutagenesis site" description="No effect on temperature stability." evidence="2">
    <original>C</original>
    <variation>S</variation>
    <location>
        <position position="294"/>
    </location>
</feature>
<dbReference type="EC" id="3.5.4.41" evidence="1 2"/>
<dbReference type="EC" id="3.5.4.31" evidence="2"/>
<dbReference type="EC" id="3.5.4.4" evidence="2"/>
<dbReference type="EC" id="3.5.4.28" evidence="2 3"/>
<dbReference type="EMBL" id="L77117">
    <property type="protein sequence ID" value="AAB99560.1"/>
    <property type="molecule type" value="Genomic_DNA"/>
</dbReference>
<dbReference type="PIR" id="D64492">
    <property type="entry name" value="D64492"/>
</dbReference>
<dbReference type="RefSeq" id="WP_010871065.1">
    <property type="nucleotide sequence ID" value="NC_000909.1"/>
</dbReference>
<dbReference type="SMR" id="Q58936"/>
<dbReference type="FunCoup" id="Q58936">
    <property type="interactions" value="37"/>
</dbReference>
<dbReference type="STRING" id="243232.MJ_1541"/>
<dbReference type="PaxDb" id="243232-MJ_1541"/>
<dbReference type="EnsemblBacteria" id="AAB99560">
    <property type="protein sequence ID" value="AAB99560"/>
    <property type="gene ID" value="MJ_1541"/>
</dbReference>
<dbReference type="GeneID" id="1452449"/>
<dbReference type="KEGG" id="mja:MJ_1541"/>
<dbReference type="eggNOG" id="arCOG00695">
    <property type="taxonomic scope" value="Archaea"/>
</dbReference>
<dbReference type="HOGENOM" id="CLU_012358_2_1_2"/>
<dbReference type="InParanoid" id="Q58936"/>
<dbReference type="OrthoDB" id="372084at2157"/>
<dbReference type="PhylomeDB" id="Q58936"/>
<dbReference type="BRENDA" id="3.5.4.28">
    <property type="organism ID" value="3260"/>
</dbReference>
<dbReference type="BRENDA" id="3.5.4.31">
    <property type="organism ID" value="3260"/>
</dbReference>
<dbReference type="BRENDA" id="3.5.4.4">
    <property type="organism ID" value="3260"/>
</dbReference>
<dbReference type="BRENDA" id="3.5.4.41">
    <property type="organism ID" value="3260"/>
</dbReference>
<dbReference type="UniPathway" id="UPA00315"/>
<dbReference type="Proteomes" id="UP000000805">
    <property type="component" value="Chromosome"/>
</dbReference>
<dbReference type="GO" id="GO:0090613">
    <property type="term" value="F:5'-deoxyadenosine deaminase activity"/>
    <property type="evidence" value="ECO:0007669"/>
    <property type="project" value="UniProtKB-UniRule"/>
</dbReference>
<dbReference type="GO" id="GO:0090614">
    <property type="term" value="F:5'-methylthioadenosine deaminase activity"/>
    <property type="evidence" value="ECO:0007669"/>
    <property type="project" value="UniProtKB-EC"/>
</dbReference>
<dbReference type="GO" id="GO:0004000">
    <property type="term" value="F:adenosine deaminase activity"/>
    <property type="evidence" value="ECO:0007669"/>
    <property type="project" value="UniProtKB-UniRule"/>
</dbReference>
<dbReference type="GO" id="GO:0046872">
    <property type="term" value="F:metal ion binding"/>
    <property type="evidence" value="ECO:0007669"/>
    <property type="project" value="UniProtKB-KW"/>
</dbReference>
<dbReference type="GO" id="GO:0050270">
    <property type="term" value="F:S-adenosylhomocysteine deaminase activity"/>
    <property type="evidence" value="ECO:0007669"/>
    <property type="project" value="UniProtKB-EC"/>
</dbReference>
<dbReference type="GO" id="GO:0006556">
    <property type="term" value="P:S-adenosylmethionine biosynthetic process"/>
    <property type="evidence" value="ECO:0007669"/>
    <property type="project" value="UniProtKB-UniRule"/>
</dbReference>
<dbReference type="CDD" id="cd01298">
    <property type="entry name" value="ATZ_TRZ_like"/>
    <property type="match status" value="1"/>
</dbReference>
<dbReference type="FunFam" id="3.20.20.140:FF:000014">
    <property type="entry name" value="5-methylthioadenosine/S-adenosylhomocysteine deaminase"/>
    <property type="match status" value="1"/>
</dbReference>
<dbReference type="Gene3D" id="3.20.20.140">
    <property type="entry name" value="Metal-dependent hydrolases"/>
    <property type="match status" value="1"/>
</dbReference>
<dbReference type="Gene3D" id="2.30.40.10">
    <property type="entry name" value="Urease, subunit C, domain 1"/>
    <property type="match status" value="1"/>
</dbReference>
<dbReference type="HAMAP" id="MF_01281">
    <property type="entry name" value="MTA_SAH_deamin"/>
    <property type="match status" value="1"/>
</dbReference>
<dbReference type="InterPro" id="IPR006680">
    <property type="entry name" value="Amidohydro-rel"/>
</dbReference>
<dbReference type="InterPro" id="IPR023512">
    <property type="entry name" value="Deaminase_MtaD/DadD"/>
</dbReference>
<dbReference type="InterPro" id="IPR011059">
    <property type="entry name" value="Metal-dep_hydrolase_composite"/>
</dbReference>
<dbReference type="InterPro" id="IPR032466">
    <property type="entry name" value="Metal_Hydrolase"/>
</dbReference>
<dbReference type="InterPro" id="IPR050287">
    <property type="entry name" value="MTA/SAH_deaminase"/>
</dbReference>
<dbReference type="PANTHER" id="PTHR43794:SF11">
    <property type="entry name" value="AMIDOHYDROLASE-RELATED DOMAIN-CONTAINING PROTEIN"/>
    <property type="match status" value="1"/>
</dbReference>
<dbReference type="PANTHER" id="PTHR43794">
    <property type="entry name" value="AMINOHYDROLASE SSNA-RELATED"/>
    <property type="match status" value="1"/>
</dbReference>
<dbReference type="Pfam" id="PF01979">
    <property type="entry name" value="Amidohydro_1"/>
    <property type="match status" value="1"/>
</dbReference>
<dbReference type="SUPFAM" id="SSF51338">
    <property type="entry name" value="Composite domain of metallo-dependent hydrolases"/>
    <property type="match status" value="1"/>
</dbReference>
<dbReference type="SUPFAM" id="SSF51556">
    <property type="entry name" value="Metallo-dependent hydrolases"/>
    <property type="match status" value="1"/>
</dbReference>
<evidence type="ECO:0000255" key="1">
    <source>
        <dbReference type="HAMAP-Rule" id="MF_01281"/>
    </source>
</evidence>
<evidence type="ECO:0000269" key="2">
    <source>
    </source>
</evidence>
<evidence type="ECO:0000269" key="3">
    <source>
    </source>
</evidence>
<evidence type="ECO:0000303" key="4">
    <source>
    </source>
</evidence>
<evidence type="ECO:0000305" key="5">
    <source>
    </source>
</evidence>
<evidence type="ECO:0000305" key="6">
    <source>
    </source>
</evidence>